<dbReference type="EC" id="3.4.11.9"/>
<dbReference type="EMBL" id="U00089">
    <property type="protein sequence ID" value="AAB96019.1"/>
    <property type="molecule type" value="Genomic_DNA"/>
</dbReference>
<dbReference type="PIR" id="S73697">
    <property type="entry name" value="S73697"/>
</dbReference>
<dbReference type="RefSeq" id="NP_110158.1">
    <property type="nucleotide sequence ID" value="NC_000912.1"/>
</dbReference>
<dbReference type="RefSeq" id="WP_010874826.1">
    <property type="nucleotide sequence ID" value="NZ_OU342337.1"/>
</dbReference>
<dbReference type="SMR" id="P75313"/>
<dbReference type="STRING" id="272634.MPN_470"/>
<dbReference type="EnsemblBacteria" id="AAB96019">
    <property type="protein sequence ID" value="AAB96019"/>
    <property type="gene ID" value="MPN_470"/>
</dbReference>
<dbReference type="KEGG" id="mpn:MPN_470"/>
<dbReference type="PATRIC" id="fig|272634.6.peg.508"/>
<dbReference type="HOGENOM" id="CLU_017266_4_0_14"/>
<dbReference type="OrthoDB" id="9806388at2"/>
<dbReference type="BioCyc" id="MPNE272634:G1GJ3-773-MONOMER"/>
<dbReference type="Proteomes" id="UP000000808">
    <property type="component" value="Chromosome"/>
</dbReference>
<dbReference type="GO" id="GO:0004177">
    <property type="term" value="F:aminopeptidase activity"/>
    <property type="evidence" value="ECO:0007669"/>
    <property type="project" value="UniProtKB-KW"/>
</dbReference>
<dbReference type="GO" id="GO:0046872">
    <property type="term" value="F:metal ion binding"/>
    <property type="evidence" value="ECO:0007669"/>
    <property type="project" value="UniProtKB-KW"/>
</dbReference>
<dbReference type="GO" id="GO:0008237">
    <property type="term" value="F:metallopeptidase activity"/>
    <property type="evidence" value="ECO:0007669"/>
    <property type="project" value="UniProtKB-KW"/>
</dbReference>
<dbReference type="GO" id="GO:0006508">
    <property type="term" value="P:proteolysis"/>
    <property type="evidence" value="ECO:0007669"/>
    <property type="project" value="UniProtKB-KW"/>
</dbReference>
<dbReference type="CDD" id="cd01092">
    <property type="entry name" value="APP-like"/>
    <property type="match status" value="1"/>
</dbReference>
<dbReference type="Gene3D" id="3.90.230.10">
    <property type="entry name" value="Creatinase/methionine aminopeptidase superfamily"/>
    <property type="match status" value="1"/>
</dbReference>
<dbReference type="Gene3D" id="3.40.350.10">
    <property type="entry name" value="Creatinase/prolidase N-terminal domain"/>
    <property type="match status" value="1"/>
</dbReference>
<dbReference type="InterPro" id="IPR029149">
    <property type="entry name" value="Creatin/AminoP/Spt16_N"/>
</dbReference>
<dbReference type="InterPro" id="IPR036005">
    <property type="entry name" value="Creatinase/aminopeptidase-like"/>
</dbReference>
<dbReference type="InterPro" id="IPR000587">
    <property type="entry name" value="Creatinase_N"/>
</dbReference>
<dbReference type="InterPro" id="IPR000994">
    <property type="entry name" value="Pept_M24"/>
</dbReference>
<dbReference type="InterPro" id="IPR050659">
    <property type="entry name" value="Peptidase_M24B"/>
</dbReference>
<dbReference type="InterPro" id="IPR001131">
    <property type="entry name" value="Peptidase_M24B_aminopep-P_CS"/>
</dbReference>
<dbReference type="PANTHER" id="PTHR46112">
    <property type="entry name" value="AMINOPEPTIDASE"/>
    <property type="match status" value="1"/>
</dbReference>
<dbReference type="PANTHER" id="PTHR46112:SF2">
    <property type="entry name" value="XAA-PRO AMINOPEPTIDASE P-RELATED"/>
    <property type="match status" value="1"/>
</dbReference>
<dbReference type="Pfam" id="PF01321">
    <property type="entry name" value="Creatinase_N"/>
    <property type="match status" value="1"/>
</dbReference>
<dbReference type="Pfam" id="PF00557">
    <property type="entry name" value="Peptidase_M24"/>
    <property type="match status" value="1"/>
</dbReference>
<dbReference type="SUPFAM" id="SSF55920">
    <property type="entry name" value="Creatinase/aminopeptidase"/>
    <property type="match status" value="1"/>
</dbReference>
<dbReference type="SUPFAM" id="SSF53092">
    <property type="entry name" value="Creatinase/prolidase N-terminal domain"/>
    <property type="match status" value="1"/>
</dbReference>
<dbReference type="PROSITE" id="PS00491">
    <property type="entry name" value="PROLINE_PEPTIDASE"/>
    <property type="match status" value="1"/>
</dbReference>
<proteinExistence type="inferred from homology"/>
<reference key="1">
    <citation type="journal article" date="1996" name="Nucleic Acids Res.">
        <title>Complete sequence analysis of the genome of the bacterium Mycoplasma pneumoniae.</title>
        <authorList>
            <person name="Himmelreich R."/>
            <person name="Hilbert H."/>
            <person name="Plagens H."/>
            <person name="Pirkl E."/>
            <person name="Li B.-C."/>
            <person name="Herrmann R."/>
        </authorList>
    </citation>
    <scope>NUCLEOTIDE SEQUENCE [LARGE SCALE GENOMIC DNA]</scope>
    <source>
        <strain>ATCC 29342 / M129 / Subtype 1</strain>
    </source>
</reference>
<gene>
    <name type="primary">pepP</name>
    <name type="ordered locus">MPN_470</name>
    <name type="ORF">MP371</name>
</gene>
<sequence length="354" mass="39624">MHNELQQKLAVLHKLLQDNKADAILIGSDQNRFWLTGFPSSAGWLVVHKQRVNLFIDGRYFEAAKTAIDPLVKVELFTTYKQVKALCEQVGVKHLLIEGDYLTFNYQNFIKELCAQYTVINAQEIRRQKLPSEILAIEKVVEITRKVAVKLKRFIQPGMTELFIAQWITDQLVKAGGAKNSFDPIVATGKNGANPHHKPSKLKVKSGDFVTCDFGTIYNGYCSDITRTFLVGKKPNNEVLLKAYKKVDEANMAGINAANTQLTGAEVDKVCRDIIEASEFKDYFVHSTGHGVGLDIHEMPNVSTSYNKLLCENAVITIEPGIYIPSVGGIRIEDMVLVKDHKSVWLSAKIPRAF</sequence>
<name>AMPP_MYCPN</name>
<accession>P75313</accession>
<organism>
    <name type="scientific">Mycoplasma pneumoniae (strain ATCC 29342 / M129 / Subtype 1)</name>
    <name type="common">Mycoplasmoides pneumoniae</name>
    <dbReference type="NCBI Taxonomy" id="272634"/>
    <lineage>
        <taxon>Bacteria</taxon>
        <taxon>Bacillati</taxon>
        <taxon>Mycoplasmatota</taxon>
        <taxon>Mycoplasmoidales</taxon>
        <taxon>Mycoplasmoidaceae</taxon>
        <taxon>Mycoplasmoides</taxon>
    </lineage>
</organism>
<keyword id="KW-0031">Aminopeptidase</keyword>
<keyword id="KW-0378">Hydrolase</keyword>
<keyword id="KW-0464">Manganese</keyword>
<keyword id="KW-0479">Metal-binding</keyword>
<keyword id="KW-0482">Metalloprotease</keyword>
<keyword id="KW-0645">Protease</keyword>
<keyword id="KW-1185">Reference proteome</keyword>
<protein>
    <recommendedName>
        <fullName>Putative Xaa-Pro aminopeptidase</fullName>
        <shortName>X-Pro aminopeptidase</shortName>
        <ecNumber>3.4.11.9</ecNumber>
    </recommendedName>
    <alternativeName>
        <fullName>Aminoacylproline aminopeptidase</fullName>
    </alternativeName>
    <alternativeName>
        <fullName>Aminopeptidase P</fullName>
        <shortName>APP</shortName>
    </alternativeName>
</protein>
<feature type="chain" id="PRO_0000185078" description="Putative Xaa-Pro aminopeptidase">
    <location>
        <begin position="1"/>
        <end position="354"/>
    </location>
</feature>
<feature type="binding site" evidence="1">
    <location>
        <position position="213"/>
    </location>
    <ligand>
        <name>Mn(2+)</name>
        <dbReference type="ChEBI" id="CHEBI:29035"/>
        <label>2</label>
    </ligand>
</feature>
<feature type="binding site" evidence="1">
    <location>
        <position position="224"/>
    </location>
    <ligand>
        <name>Mn(2+)</name>
        <dbReference type="ChEBI" id="CHEBI:29035"/>
        <label>1</label>
    </ligand>
</feature>
<feature type="binding site" evidence="1">
    <location>
        <position position="224"/>
    </location>
    <ligand>
        <name>Mn(2+)</name>
        <dbReference type="ChEBI" id="CHEBI:29035"/>
        <label>2</label>
    </ligand>
</feature>
<feature type="binding site" evidence="1">
    <location>
        <position position="290"/>
    </location>
    <ligand>
        <name>Mn(2+)</name>
        <dbReference type="ChEBI" id="CHEBI:29035"/>
        <label>1</label>
    </ligand>
</feature>
<feature type="binding site" evidence="1">
    <location>
        <position position="319"/>
    </location>
    <ligand>
        <name>Mn(2+)</name>
        <dbReference type="ChEBI" id="CHEBI:29035"/>
        <label>1</label>
    </ligand>
</feature>
<feature type="binding site" evidence="1">
    <location>
        <position position="333"/>
    </location>
    <ligand>
        <name>Mn(2+)</name>
        <dbReference type="ChEBI" id="CHEBI:29035"/>
        <label>1</label>
    </ligand>
</feature>
<feature type="binding site" evidence="1">
    <location>
        <position position="333"/>
    </location>
    <ligand>
        <name>Mn(2+)</name>
        <dbReference type="ChEBI" id="CHEBI:29035"/>
        <label>2</label>
    </ligand>
</feature>
<comment type="catalytic activity">
    <reaction>
        <text>Release of any N-terminal amino acid, including proline, that is linked to proline, even from a dipeptide or tripeptide.</text>
        <dbReference type="EC" id="3.4.11.9"/>
    </reaction>
</comment>
<comment type="cofactor">
    <cofactor evidence="1">
        <name>Mn(2+)</name>
        <dbReference type="ChEBI" id="CHEBI:29035"/>
    </cofactor>
    <text evidence="1">Binds 2 manganese ions per subunit.</text>
</comment>
<comment type="similarity">
    <text evidence="2">Belongs to the peptidase M24B family.</text>
</comment>
<evidence type="ECO:0000250" key="1"/>
<evidence type="ECO:0000305" key="2"/>